<organism>
    <name type="scientific">Mus musculus</name>
    <name type="common">Mouse</name>
    <dbReference type="NCBI Taxonomy" id="10090"/>
    <lineage>
        <taxon>Eukaryota</taxon>
        <taxon>Metazoa</taxon>
        <taxon>Chordata</taxon>
        <taxon>Craniata</taxon>
        <taxon>Vertebrata</taxon>
        <taxon>Euteleostomi</taxon>
        <taxon>Mammalia</taxon>
        <taxon>Eutheria</taxon>
        <taxon>Euarchontoglires</taxon>
        <taxon>Glires</taxon>
        <taxon>Rodentia</taxon>
        <taxon>Myomorpha</taxon>
        <taxon>Muroidea</taxon>
        <taxon>Muridae</taxon>
        <taxon>Murinae</taxon>
        <taxon>Mus</taxon>
        <taxon>Mus</taxon>
    </lineage>
</organism>
<sequence>MAEGYDAALSVAEWLRALHLEQYTALFEQHGLVWATECQGLSDAGLLDMGMHLPGHRRRILAGLHRAHAPPVPLPRPAPRPVPMKRHIFRSPPVPVTPPEPPPTAGEDEGLPAAPPIPPRRSCLPPACFTPTSTAAPDPVLPPLPAKRHLVEPSVPPVPPRTGPPYPQASLLAKEELLLPSVSPRSQPEPAETPSTLLPAFPQGPLQPPSPPPCPPVIPPKPPRLLPEFDDSDYDDVPEEGPGAPASVMTKEEPLPSRVPRAVRVASLLSEGEELSGDDSEDDDDHAYEGIPNGGWPTSGLNPPLRSLIPDLPLHPMDELPGGPTPITPVIKAGWLDKNPPQGSYIYQKRWVRLDADYLRYFDSNKDAYSKRFVPVACICRVAPIGDQKFEVITNNRTFAFRAESDVERNEWMQALQQAVVEHRARFRLSSASVLGVRGSEQPDRAGSLELRGFKNKLYVAVTGDKVQLYKNLEEFHLGIGITFIDMNVGNVKEVDRRSFDLTTPYRIFSFSADSELEKEQWLEAMQGAIAEALSTSEVAERIWAAAPNRFCADCGAAQPDWASINLCVVICKRCAGEHRGLGAGVSKVRSLKMDRKVWTEALIQLFLHLGNGPGNHFWAANVPPSEALEPSSSPGARRYHLEAKYREGKYRRYHPLFGNQEELDKALCAAVTTTDLAETQALLGCGAGVSCFSGDPAAPTPLALAEQAGQTLQMEFLRNNQSTEVPRLDSVKPLEKHYSVTLPTVSHSGFLYKTASAGKPLQDRRAREEFSRRWCVLSDGVLSYYENERAVTPNGEIRASEIVCLAVSPLDTHGFEHTFEVYTEGERLYLFGLENAELAHEWVKCIAKAFVPPLAEDLLARDFERLGRLPCKAGLSLQQAQEGWFALTGSELRAVFPEGPWEEPLQLRKLQELSIQGDSENQVLVLVERRRTLYIQGERRLDFMAWLGVIQKAAASLGDTLSEQQLGDSDIPVIVYRCVDYITQCGLTSEGIYRKCGQTSKTQRLLDSLRQDARSVHLKEGEQHVDDVSSALKRFLRDLPDGLFTRAQRLAWLEASEIEDEEEKISRYRELLVHLPPVNRATVKALISHLYCVQCFSDTNQMNTHNLAIVFGPTLFQTDGQDYKAGKVVEDLINHYVVVFSVDEEELRKQREEVTAIVKMRVAGTASGTQHAGDFICTVYLEEKKVETEQHVKIPASMTAEELTLEILDRRNVSIREKDYWTCFEVNEKEEAERPLHFAEKVLPIVHGLGIDSHLVVKKYQSMEAMLLYLASRVGDTKHGMMKFREDRSLLGLGLPSGGFHDRYFILNSSCLRLYKEVRSQRPWSGAPETSHRPEKEWPVKSLKVYLGVKKKLRPPTCWGFTVVHETEKHEKQQWYLCCDTQMELREWFATFLSVQHDGLVWPSEPSRVSRAVPEVRMGSVSLIPLRGSENEMRRSVAAFTADPLSLLRHV</sequence>
<accession>Q4LDD4</accession>
<accession>B2RUJ3</accession>
<accession>Q3UDD2</accession>
<accession>Q3US99</accession>
<accession>Q58ET6</accession>
<accession>Q6PEQ9</accession>
<accession>Q6ZQ48</accession>
<evidence type="ECO:0000250" key="1">
    <source>
        <dbReference type="UniProtKB" id="Q96P48"/>
    </source>
</evidence>
<evidence type="ECO:0000255" key="2">
    <source>
        <dbReference type="PROSITE-ProRule" id="PRU00145"/>
    </source>
</evidence>
<evidence type="ECO:0000255" key="3">
    <source>
        <dbReference type="PROSITE-ProRule" id="PRU00166"/>
    </source>
</evidence>
<evidence type="ECO:0000255" key="4">
    <source>
        <dbReference type="PROSITE-ProRule" id="PRU00172"/>
    </source>
</evidence>
<evidence type="ECO:0000255" key="5">
    <source>
        <dbReference type="PROSITE-ProRule" id="PRU00184"/>
    </source>
</evidence>
<evidence type="ECO:0000255" key="6">
    <source>
        <dbReference type="PROSITE-ProRule" id="PRU00288"/>
    </source>
</evidence>
<evidence type="ECO:0000256" key="7">
    <source>
        <dbReference type="SAM" id="MobiDB-lite"/>
    </source>
</evidence>
<evidence type="ECO:0000269" key="8">
    <source>
    </source>
</evidence>
<evidence type="ECO:0000269" key="9">
    <source>
    </source>
</evidence>
<evidence type="ECO:0000269" key="10">
    <source>
    </source>
</evidence>
<evidence type="ECO:0000269" key="11">
    <source>
    </source>
</evidence>
<evidence type="ECO:0000269" key="12">
    <source>
    </source>
</evidence>
<evidence type="ECO:0000269" key="13">
    <source>
    </source>
</evidence>
<evidence type="ECO:0000303" key="14">
    <source>
    </source>
</evidence>
<evidence type="ECO:0000303" key="15">
    <source>
    </source>
</evidence>
<evidence type="ECO:0000305" key="16"/>
<evidence type="ECO:0000312" key="17">
    <source>
        <dbReference type="EMBL" id="AAH57922.1"/>
    </source>
</evidence>
<evidence type="ECO:0000312" key="18">
    <source>
        <dbReference type="EMBL" id="AAI41180.1"/>
    </source>
</evidence>
<evidence type="ECO:0000312" key="19">
    <source>
        <dbReference type="EMBL" id="BAC98023.1"/>
    </source>
</evidence>
<evidence type="ECO:0000312" key="20">
    <source>
        <dbReference type="EMBL" id="BAE23358.1"/>
    </source>
</evidence>
<evidence type="ECO:0000312" key="21">
    <source>
        <dbReference type="EMBL" id="BAE24434.1"/>
    </source>
</evidence>
<evidence type="ECO:0000312" key="22">
    <source>
        <dbReference type="EMBL" id="BAE29329.1"/>
    </source>
</evidence>
<evidence type="ECO:0000312" key="23">
    <source>
        <dbReference type="EMBL" id="CAF21318.1"/>
    </source>
</evidence>
<evidence type="ECO:0000312" key="24">
    <source>
        <dbReference type="MGI" id="MGI:1916960"/>
    </source>
</evidence>
<evidence type="ECO:0007744" key="25">
    <source>
        <dbReference type="PDB" id="5XHZ"/>
    </source>
</evidence>
<evidence type="ECO:0007744" key="26">
    <source>
    </source>
</evidence>
<comment type="function">
    <text evidence="1 10 12 13">Phosphatidylinositol 3,4,5-trisphosphate-dependent GTPase-activating protein that modulates actin cytoskeleton remodeling by regulating ARF and RHO family members (By similarity). Activated by phosphatidylinositol 3,4,5-trisphosphate (PtdIns(3,4,5)P3) binding and, to a lesser extent, by phosphatidylinositol 3,4-bisphosphate (PtdIns(3,4)P2) binding (By similarity). Has a preference for ARF1 and ARF5 (By similarity). Positively regulates the ring size of circular dorsal ruffles and promotes macropinocytosis (By similarity). Acts as a bridging factor in osteoclasts to control actin and membrane dynamics (PubMed:30240610). Regulates the condensing of osteoclast podosomes into sealing zones which segregate the bone-facing membrane from other membrane domains and are required for osteoclast resorption activity (PubMed:30240610). Also regulates recruitment of the AP-3 complex to endosomal membranes and trafficking of lysosomal membrane proteins to the ruffled membrane border of osteoclasts to modulate bone resorption (PubMed:30240610). Regulates the endocytic trafficking of EGFR (By similarity). Regulates the incorporation of CD63 and CD9 into multivesicular bodies (By similarity). Required in the retinal pigment epithelium (RPE) for photoreceptor survival due to its role in promoting RPE phagocytosis (PubMed:28324111, PubMed:35758026).</text>
</comment>
<comment type="subunit">
    <text evidence="1 11">Interacts with SH3KBP1/CIN85 (via SH3 domains) (PubMed:29589748). The interaction is independent of EGF and does not affect ARAP1 GTPase-activating activity but is involved in regulating ubiquitination and endocytic trafficking of EGFR (By similarity). ARAP1 competes with E3 ubiquitin-protein ligase CBL for binding to SH3KBP1, preventing interaction of CBL with SH3KBP1; this is likely to regulate SH3KBP1-mediated internalization of EGFR (PubMed:29589748). Interacts with TNFRSF10A (By similarity).</text>
</comment>
<comment type="subcellular location">
    <subcellularLocation>
        <location evidence="1">Cytoplasm</location>
    </subcellularLocation>
    <subcellularLocation>
        <location evidence="1">Golgi apparatus</location>
        <location evidence="1">trans-Golgi network</location>
    </subcellularLocation>
    <subcellularLocation>
        <location evidence="1">Golgi apparatus</location>
        <location evidence="1">Golgi stack membrane</location>
    </subcellularLocation>
    <subcellularLocation>
        <location evidence="1">Cell membrane</location>
        <topology evidence="16">Peripheral membrane protein</topology>
    </subcellularLocation>
    <subcellularLocation>
        <location evidence="1">Endosome</location>
        <location evidence="1">Multivesicular body</location>
    </subcellularLocation>
    <subcellularLocation>
        <location evidence="1">Cell projection</location>
        <location evidence="1">Ruffle</location>
    </subcellularLocation>
    <subcellularLocation>
        <location evidence="12">Cell projection</location>
        <location evidence="12">Podosome</location>
    </subcellularLocation>
    <subcellularLocation>
        <location evidence="12">Early endosome</location>
    </subcellularLocation>
    <text evidence="1 12">Associated with Golgi stacks in resting cells (By similarity). Throughout the cytoplasm and in surface protrusions in cells that are in the process of attaching to a surface and spreading (By similarity). Localizes to actin-rich podosomes, sealing zones and early endosomes in osteoclasts (PubMed:30240610).</text>
</comment>
<comment type="alternative products">
    <event type="alternative splicing"/>
    <isoform>
        <id>Q4LDD4-1</id>
        <name>1</name>
        <sequence type="displayed"/>
    </isoform>
    <isoform>
        <id>Q4LDD4-2</id>
        <name evidence="8 9">2</name>
        <sequence type="described" ref="VSP_053048"/>
    </isoform>
    <isoform>
        <id>Q4LDD4-3</id>
        <name evidence="9">3</name>
        <sequence type="described" ref="VSP_053047 VSP_053048"/>
    </isoform>
</comment>
<comment type="tissue specificity">
    <text evidence="10 12 13">Expressed in the retina where it is detected in Mueller glia (at protein level) (PubMed:28324111). Also detected in the retinal pigment epithelium (at protein level) (PubMed:35758026). Expressed in osteoclasts (at protein level) (PubMed:30240610).</text>
</comment>
<comment type="developmental stage">
    <text evidence="12">Expression increases during osteoclast differentiation, reaching a maximum in mature multinucleated osteoclasts (at protein level).</text>
</comment>
<comment type="domain">
    <text evidence="1">The first PH domain, PH 1, interacts with PtdIns(3,4,5)P3 which stimulates ARAP1 GTPase-activating activity and is also required for ARAP1-mediated regulation of endocytic trafficking of EGFR. It does not mediate PtdIns(3,4,5)P3-dependent recruitment of ARAP1 to membranes although this may be mediated by other PH domains.</text>
</comment>
<comment type="PTM">
    <text evidence="1">Phosphorylated by PTK6 following EGF stimulation which enhances EGFR signaling by delaying EGFR down-regulation; the interaction is mediated by the SH2 domain of PTK6. Phosphorylation promotes association with the Golgi apparatus and endosomes.</text>
</comment>
<comment type="disruption phenotype">
    <text evidence="10 13">Progressive retinal degeneration from postnatal week 4 with the fundus developing pigmentary changes, retinal vascular attenuation, optic nerve pallor and outer retinal thinning (PubMed:28324111). Defective phagocytosis in the retinal pigment epithelium (PubMed:35758026). Conditional knockout in the retinal pigment epithelium results in optic nerve pallor, attenuated retinal arteries, retinal pigmentary changes and outer retinal thinning (PubMed:35758026). Conditional knockout in Mueller glia results in mice which are phenotypically indistinguishable from the wild type (PubMed:35758026).</text>
</comment>
<name>ARAP1_MOUSE</name>
<dbReference type="EMBL" id="AJ621558">
    <property type="protein sequence ID" value="CAF21318.1"/>
    <property type="molecule type" value="mRNA"/>
</dbReference>
<dbReference type="EMBL" id="AK137455">
    <property type="protein sequence ID" value="BAE23358.1"/>
    <property type="molecule type" value="mRNA"/>
</dbReference>
<dbReference type="EMBL" id="AK140646">
    <property type="protein sequence ID" value="BAE24434.1"/>
    <property type="molecule type" value="mRNA"/>
</dbReference>
<dbReference type="EMBL" id="AK150132">
    <property type="protein sequence ID" value="BAE29329.1"/>
    <property type="molecule type" value="mRNA"/>
</dbReference>
<dbReference type="EMBL" id="BC057922">
    <property type="protein sequence ID" value="AAH57922.1"/>
    <property type="molecule type" value="mRNA"/>
</dbReference>
<dbReference type="EMBL" id="BC091762">
    <property type="protein sequence ID" value="AAH91762.1"/>
    <property type="molecule type" value="mRNA"/>
</dbReference>
<dbReference type="EMBL" id="BC141179">
    <property type="protein sequence ID" value="AAI41180.1"/>
    <property type="molecule type" value="mRNA"/>
</dbReference>
<dbReference type="EMBL" id="AK129213">
    <property type="protein sequence ID" value="BAC98023.1"/>
    <property type="molecule type" value="mRNA"/>
</dbReference>
<dbReference type="CCDS" id="CCDS21510.1">
    <molecule id="Q4LDD4-3"/>
</dbReference>
<dbReference type="CCDS" id="CCDS40041.1">
    <molecule id="Q4LDD4-2"/>
</dbReference>
<dbReference type="RefSeq" id="NP_001035200.1">
    <molecule id="Q4LDD4-2"/>
    <property type="nucleotide sequence ID" value="NM_001040111.2"/>
</dbReference>
<dbReference type="RefSeq" id="NP_001035201.1">
    <molecule id="Q4LDD4-3"/>
    <property type="nucleotide sequence ID" value="NM_001040112.2"/>
</dbReference>
<dbReference type="RefSeq" id="NP_001394732.1">
    <molecule id="Q4LDD4-1"/>
    <property type="nucleotide sequence ID" value="NM_001407803.1"/>
</dbReference>
<dbReference type="RefSeq" id="NP_081456.2">
    <molecule id="Q4LDD4-3"/>
    <property type="nucleotide sequence ID" value="NM_027180.3"/>
</dbReference>
<dbReference type="RefSeq" id="NP_932764.1">
    <property type="nucleotide sequence ID" value="NM_198096.1"/>
</dbReference>
<dbReference type="RefSeq" id="XP_006508249.1">
    <property type="nucleotide sequence ID" value="XM_006508186.3"/>
</dbReference>
<dbReference type="RefSeq" id="XP_006508250.1">
    <molecule id="Q4LDD4-1"/>
    <property type="nucleotide sequence ID" value="XM_006508187.3"/>
</dbReference>
<dbReference type="RefSeq" id="XP_006508251.1">
    <molecule id="Q4LDD4-1"/>
    <property type="nucleotide sequence ID" value="XM_006508188.5"/>
</dbReference>
<dbReference type="RefSeq" id="XP_011240199.1">
    <molecule id="Q4LDD4-1"/>
    <property type="nucleotide sequence ID" value="XM_011241897.4"/>
</dbReference>
<dbReference type="RefSeq" id="XP_036009315.1">
    <molecule id="Q4LDD4-3"/>
    <property type="nucleotide sequence ID" value="XM_036153422.1"/>
</dbReference>
<dbReference type="PDB" id="5XHZ">
    <property type="method" value="X-ray"/>
    <property type="resolution" value="1.32 A"/>
    <property type="chains" value="C/D=80-90"/>
</dbReference>
<dbReference type="PDBsum" id="5XHZ"/>
<dbReference type="SMR" id="Q4LDD4"/>
<dbReference type="BioGRID" id="213630">
    <property type="interactions" value="1"/>
</dbReference>
<dbReference type="FunCoup" id="Q4LDD4">
    <property type="interactions" value="2301"/>
</dbReference>
<dbReference type="IntAct" id="Q4LDD4">
    <property type="interactions" value="1"/>
</dbReference>
<dbReference type="STRING" id="10090.ENSMUSP00000102624"/>
<dbReference type="GlyGen" id="Q4LDD4">
    <property type="glycosylation" value="5 sites"/>
</dbReference>
<dbReference type="iPTMnet" id="Q4LDD4"/>
<dbReference type="PhosphoSitePlus" id="Q4LDD4"/>
<dbReference type="SwissPalm" id="Q4LDD4"/>
<dbReference type="jPOST" id="Q4LDD4"/>
<dbReference type="PaxDb" id="10090-ENSMUSP00000102624"/>
<dbReference type="PeptideAtlas" id="Q4LDD4"/>
<dbReference type="ProteomicsDB" id="296277">
    <molecule id="Q4LDD4-1"/>
</dbReference>
<dbReference type="ProteomicsDB" id="296278">
    <molecule id="Q4LDD4-2"/>
</dbReference>
<dbReference type="ProteomicsDB" id="296279">
    <molecule id="Q4LDD4-3"/>
</dbReference>
<dbReference type="Pumba" id="Q4LDD4"/>
<dbReference type="Antibodypedia" id="30876">
    <property type="antibodies" value="180 antibodies from 30 providers"/>
</dbReference>
<dbReference type="Ensembl" id="ENSMUST00000084895.12">
    <molecule id="Q4LDD4-3"/>
    <property type="protein sequence ID" value="ENSMUSP00000081957.6"/>
    <property type="gene ID" value="ENSMUSG00000032812.19"/>
</dbReference>
<dbReference type="Ensembl" id="ENSMUST00000084896.10">
    <molecule id="Q4LDD4-1"/>
    <property type="protein sequence ID" value="ENSMUSP00000081958.4"/>
    <property type="gene ID" value="ENSMUSG00000032812.19"/>
</dbReference>
<dbReference type="Ensembl" id="ENSMUST00000107010.9">
    <molecule id="Q4LDD4-2"/>
    <property type="protein sequence ID" value="ENSMUSP00000102624.3"/>
    <property type="gene ID" value="ENSMUSG00000032812.19"/>
</dbReference>
<dbReference type="GeneID" id="69710"/>
<dbReference type="KEGG" id="mmu:69710"/>
<dbReference type="UCSC" id="uc009iok.1">
    <molecule id="Q4LDD4-2"/>
    <property type="organism name" value="mouse"/>
</dbReference>
<dbReference type="UCSC" id="uc009iol.1">
    <molecule id="Q4LDD4-1"/>
    <property type="organism name" value="mouse"/>
</dbReference>
<dbReference type="UCSC" id="uc009iom.1">
    <molecule id="Q4LDD4-3"/>
    <property type="organism name" value="mouse"/>
</dbReference>
<dbReference type="AGR" id="MGI:1916960"/>
<dbReference type="CTD" id="116985"/>
<dbReference type="MGI" id="MGI:1916960">
    <property type="gene designation" value="Arap1"/>
</dbReference>
<dbReference type="VEuPathDB" id="HostDB:ENSMUSG00000032812"/>
<dbReference type="eggNOG" id="KOG1117">
    <property type="taxonomic scope" value="Eukaryota"/>
</dbReference>
<dbReference type="GeneTree" id="ENSGT00940000157424"/>
<dbReference type="HOGENOM" id="CLU_002900_1_1_1"/>
<dbReference type="InParanoid" id="Q4LDD4"/>
<dbReference type="OMA" id="YEQCSSP"/>
<dbReference type="OrthoDB" id="29546at2759"/>
<dbReference type="PhylomeDB" id="Q4LDD4"/>
<dbReference type="TreeFam" id="TF105769"/>
<dbReference type="Reactome" id="R-MMU-8849469">
    <property type="pathway name" value="PTK6 Regulates RTKs and Their Effectors AKT1 and DOK1"/>
</dbReference>
<dbReference type="Reactome" id="R-MMU-8980692">
    <property type="pathway name" value="RHOA GTPase cycle"/>
</dbReference>
<dbReference type="Reactome" id="R-MMU-9013148">
    <property type="pathway name" value="CDC42 GTPase cycle"/>
</dbReference>
<dbReference type="Reactome" id="R-MMU-9013149">
    <property type="pathway name" value="RAC1 GTPase cycle"/>
</dbReference>
<dbReference type="BioGRID-ORCS" id="69710">
    <property type="hits" value="3 hits in 77 CRISPR screens"/>
</dbReference>
<dbReference type="ChiTaRS" id="Arap1">
    <property type="organism name" value="mouse"/>
</dbReference>
<dbReference type="PRO" id="PR:Q4LDD4"/>
<dbReference type="Proteomes" id="UP000000589">
    <property type="component" value="Chromosome 7"/>
</dbReference>
<dbReference type="RNAct" id="Q4LDD4">
    <property type="molecule type" value="protein"/>
</dbReference>
<dbReference type="Bgee" id="ENSMUSG00000032812">
    <property type="expression patterns" value="Expressed in granulocyte and 169 other cell types or tissues"/>
</dbReference>
<dbReference type="ExpressionAtlas" id="Q4LDD4">
    <property type="expression patterns" value="baseline and differential"/>
</dbReference>
<dbReference type="GO" id="GO:0005829">
    <property type="term" value="C:cytosol"/>
    <property type="evidence" value="ECO:0007669"/>
    <property type="project" value="Ensembl"/>
</dbReference>
<dbReference type="GO" id="GO:0005769">
    <property type="term" value="C:early endosome"/>
    <property type="evidence" value="ECO:0000314"/>
    <property type="project" value="UniProtKB"/>
</dbReference>
<dbReference type="GO" id="GO:0019897">
    <property type="term" value="C:extrinsic component of plasma membrane"/>
    <property type="evidence" value="ECO:0000250"/>
    <property type="project" value="UniProtKB"/>
</dbReference>
<dbReference type="GO" id="GO:0005794">
    <property type="term" value="C:Golgi apparatus"/>
    <property type="evidence" value="ECO:0000250"/>
    <property type="project" value="UniProtKB"/>
</dbReference>
<dbReference type="GO" id="GO:0032580">
    <property type="term" value="C:Golgi cisterna membrane"/>
    <property type="evidence" value="ECO:0007669"/>
    <property type="project" value="UniProtKB-SubCell"/>
</dbReference>
<dbReference type="GO" id="GO:0005771">
    <property type="term" value="C:multivesicular body"/>
    <property type="evidence" value="ECO:0000250"/>
    <property type="project" value="UniProtKB"/>
</dbReference>
<dbReference type="GO" id="GO:0005654">
    <property type="term" value="C:nucleoplasm"/>
    <property type="evidence" value="ECO:0007669"/>
    <property type="project" value="Ensembl"/>
</dbReference>
<dbReference type="GO" id="GO:0002102">
    <property type="term" value="C:podosome"/>
    <property type="evidence" value="ECO:0000314"/>
    <property type="project" value="UniProtKB"/>
</dbReference>
<dbReference type="GO" id="GO:0001726">
    <property type="term" value="C:ruffle"/>
    <property type="evidence" value="ECO:0007669"/>
    <property type="project" value="UniProtKB-SubCell"/>
</dbReference>
<dbReference type="GO" id="GO:0005802">
    <property type="term" value="C:trans-Golgi network"/>
    <property type="evidence" value="ECO:0007669"/>
    <property type="project" value="Ensembl"/>
</dbReference>
<dbReference type="GO" id="GO:0003700">
    <property type="term" value="F:DNA-binding transcription factor activity"/>
    <property type="evidence" value="ECO:0000250"/>
    <property type="project" value="UniProtKB"/>
</dbReference>
<dbReference type="GO" id="GO:0005096">
    <property type="term" value="F:GTPase activator activity"/>
    <property type="evidence" value="ECO:0000250"/>
    <property type="project" value="UniProtKB"/>
</dbReference>
<dbReference type="GO" id="GO:0005547">
    <property type="term" value="F:phosphatidylinositol-3,4,5-trisphosphate binding"/>
    <property type="evidence" value="ECO:0000250"/>
    <property type="project" value="UniProtKB"/>
</dbReference>
<dbReference type="GO" id="GO:0070412">
    <property type="term" value="F:R-SMAD binding"/>
    <property type="evidence" value="ECO:0000250"/>
    <property type="project" value="UniProtKB"/>
</dbReference>
<dbReference type="GO" id="GO:0061629">
    <property type="term" value="F:RNA polymerase II-specific DNA-binding transcription factor binding"/>
    <property type="evidence" value="ECO:0000250"/>
    <property type="project" value="BHF-UCL"/>
</dbReference>
<dbReference type="GO" id="GO:0000976">
    <property type="term" value="F:transcription cis-regulatory region binding"/>
    <property type="evidence" value="ECO:0000250"/>
    <property type="project" value="UniProtKB"/>
</dbReference>
<dbReference type="GO" id="GO:0031702">
    <property type="term" value="F:type 1 angiotensin receptor binding"/>
    <property type="evidence" value="ECO:0007669"/>
    <property type="project" value="Ensembl"/>
</dbReference>
<dbReference type="GO" id="GO:0008270">
    <property type="term" value="F:zinc ion binding"/>
    <property type="evidence" value="ECO:0007669"/>
    <property type="project" value="UniProtKB-KW"/>
</dbReference>
<dbReference type="GO" id="GO:0051497">
    <property type="term" value="P:negative regulation of stress fiber assembly"/>
    <property type="evidence" value="ECO:0007669"/>
    <property type="project" value="Ensembl"/>
</dbReference>
<dbReference type="GO" id="GO:0045494">
    <property type="term" value="P:photoreceptor cell maintenance"/>
    <property type="evidence" value="ECO:0000315"/>
    <property type="project" value="UniProtKB"/>
</dbReference>
<dbReference type="GO" id="GO:0045893">
    <property type="term" value="P:positive regulation of DNA-templated transcription"/>
    <property type="evidence" value="ECO:0000250"/>
    <property type="project" value="UniProtKB"/>
</dbReference>
<dbReference type="GO" id="GO:0051491">
    <property type="term" value="P:positive regulation of filopodium assembly"/>
    <property type="evidence" value="ECO:0007669"/>
    <property type="project" value="Ensembl"/>
</dbReference>
<dbReference type="GO" id="GO:0050766">
    <property type="term" value="P:positive regulation of phagocytosis"/>
    <property type="evidence" value="ECO:0000315"/>
    <property type="project" value="UniProtKB"/>
</dbReference>
<dbReference type="GO" id="GO:0001921">
    <property type="term" value="P:positive regulation of receptor recycling"/>
    <property type="evidence" value="ECO:0007669"/>
    <property type="project" value="Ensembl"/>
</dbReference>
<dbReference type="GO" id="GO:0045124">
    <property type="term" value="P:regulation of bone resorption"/>
    <property type="evidence" value="ECO:0000315"/>
    <property type="project" value="UniProtKB"/>
</dbReference>
<dbReference type="GO" id="GO:0008360">
    <property type="term" value="P:regulation of cell shape"/>
    <property type="evidence" value="ECO:0007669"/>
    <property type="project" value="Ensembl"/>
</dbReference>
<dbReference type="GO" id="GO:0002090">
    <property type="term" value="P:regulation of receptor internalization"/>
    <property type="evidence" value="ECO:0000250"/>
    <property type="project" value="UniProtKB"/>
</dbReference>
<dbReference type="GO" id="GO:0007179">
    <property type="term" value="P:transforming growth factor beta receptor signaling pathway"/>
    <property type="evidence" value="ECO:0000250"/>
    <property type="project" value="UniProtKB"/>
</dbReference>
<dbReference type="CDD" id="cd08837">
    <property type="entry name" value="ArfGap_ARAP"/>
    <property type="match status" value="1"/>
</dbReference>
<dbReference type="CDD" id="cd13253">
    <property type="entry name" value="PH1_ARAP"/>
    <property type="match status" value="1"/>
</dbReference>
<dbReference type="CDD" id="cd13254">
    <property type="entry name" value="PH2_ARAP"/>
    <property type="match status" value="1"/>
</dbReference>
<dbReference type="CDD" id="cd13256">
    <property type="entry name" value="PH3_ARAP"/>
    <property type="match status" value="1"/>
</dbReference>
<dbReference type="CDD" id="cd13259">
    <property type="entry name" value="PH5_ARAP"/>
    <property type="match status" value="1"/>
</dbReference>
<dbReference type="CDD" id="cd17226">
    <property type="entry name" value="RA_ARAP1"/>
    <property type="match status" value="1"/>
</dbReference>
<dbReference type="CDD" id="cd04385">
    <property type="entry name" value="RhoGAP_ARAP"/>
    <property type="match status" value="1"/>
</dbReference>
<dbReference type="CDD" id="cd09490">
    <property type="entry name" value="SAM_Arap1_2_3"/>
    <property type="match status" value="1"/>
</dbReference>
<dbReference type="FunFam" id="1.10.555.10:FF:000023">
    <property type="entry name" value="Arf-GAP with Rho-GAP domain, ANK repeat and PH domain-containing protein 1"/>
    <property type="match status" value="1"/>
</dbReference>
<dbReference type="FunFam" id="2.30.29.30:FF:000170">
    <property type="entry name" value="Arf-GAP with Rho-GAP domain, ANK repeat and PH domain-containing protein 1"/>
    <property type="match status" value="1"/>
</dbReference>
<dbReference type="FunFam" id="2.30.29.30:FF:000173">
    <property type="entry name" value="Arf-GAP with Rho-GAP domain, ANK repeat and PH domain-containing protein 1"/>
    <property type="match status" value="1"/>
</dbReference>
<dbReference type="FunFam" id="2.30.29.30:FF:000181">
    <property type="entry name" value="Arf-GAP with Rho-GAP domain, ANK repeat and PH domain-containing protein 1"/>
    <property type="match status" value="1"/>
</dbReference>
<dbReference type="FunFam" id="2.30.29.30:FF:000186">
    <property type="entry name" value="Arf-GAP with Rho-GAP domain, ANK repeat and PH domain-containing protein 1"/>
    <property type="match status" value="1"/>
</dbReference>
<dbReference type="FunFam" id="3.10.20.90:FF:000136">
    <property type="entry name" value="Arf-GAP with Rho-GAP domain, ANK repeat and PH domain-containing protein 1"/>
    <property type="match status" value="1"/>
</dbReference>
<dbReference type="FunFam" id="1.10.150.50:FF:000064">
    <property type="entry name" value="arf-GAP with Rho-GAP domain, ANK repeat and PH domain-containing protein 1 isoform X1"/>
    <property type="match status" value="1"/>
</dbReference>
<dbReference type="FunFam" id="1.10.220.150:FF:000006">
    <property type="entry name" value="arf-GAP with Rho-GAP domain, ANK repeat and PH domain-containing protein 3"/>
    <property type="match status" value="1"/>
</dbReference>
<dbReference type="Gene3D" id="1.10.220.150">
    <property type="entry name" value="Arf GTPase activating protein"/>
    <property type="match status" value="1"/>
</dbReference>
<dbReference type="Gene3D" id="3.10.20.90">
    <property type="entry name" value="Phosphatidylinositol 3-kinase Catalytic Subunit, Chain A, domain 1"/>
    <property type="match status" value="1"/>
</dbReference>
<dbReference type="Gene3D" id="2.30.29.30">
    <property type="entry name" value="Pleckstrin-homology domain (PH domain)/Phosphotyrosine-binding domain (PTB)"/>
    <property type="match status" value="4"/>
</dbReference>
<dbReference type="Gene3D" id="1.10.555.10">
    <property type="entry name" value="Rho GTPase activation protein"/>
    <property type="match status" value="1"/>
</dbReference>
<dbReference type="Gene3D" id="1.10.150.50">
    <property type="entry name" value="Transcription Factor, Ets-1"/>
    <property type="match status" value="1"/>
</dbReference>
<dbReference type="InterPro" id="IPR052227">
    <property type="entry name" value="Arf-Rho-GAP_ANK-PH_domain"/>
</dbReference>
<dbReference type="InterPro" id="IPR037278">
    <property type="entry name" value="ARFGAP/RecO"/>
</dbReference>
<dbReference type="InterPro" id="IPR001164">
    <property type="entry name" value="ArfGAP_dom"/>
</dbReference>
<dbReference type="InterPro" id="IPR038508">
    <property type="entry name" value="ArfGAP_dom_sf"/>
</dbReference>
<dbReference type="InterPro" id="IPR011993">
    <property type="entry name" value="PH-like_dom_sf"/>
</dbReference>
<dbReference type="InterPro" id="IPR001849">
    <property type="entry name" value="PH_domain"/>
</dbReference>
<dbReference type="InterPro" id="IPR000159">
    <property type="entry name" value="RA_dom"/>
</dbReference>
<dbReference type="InterPro" id="IPR008936">
    <property type="entry name" value="Rho_GTPase_activation_prot"/>
</dbReference>
<dbReference type="InterPro" id="IPR037858">
    <property type="entry name" value="RhoGAP_ARAP"/>
</dbReference>
<dbReference type="InterPro" id="IPR000198">
    <property type="entry name" value="RhoGAP_dom"/>
</dbReference>
<dbReference type="InterPro" id="IPR001660">
    <property type="entry name" value="SAM"/>
</dbReference>
<dbReference type="InterPro" id="IPR013761">
    <property type="entry name" value="SAM/pointed_sf"/>
</dbReference>
<dbReference type="PANTHER" id="PTHR45899:SF3">
    <property type="entry name" value="ARF-GAP WITH RHO-GAP DOMAIN, ANK REPEAT AND PH DOMAIN-CONTAINING PROTEIN 1"/>
    <property type="match status" value="1"/>
</dbReference>
<dbReference type="PANTHER" id="PTHR45899">
    <property type="entry name" value="RHO GTPASE ACTIVATING PROTEIN AT 15B, ISOFORM C"/>
    <property type="match status" value="1"/>
</dbReference>
<dbReference type="Pfam" id="PF01412">
    <property type="entry name" value="ArfGap"/>
    <property type="match status" value="1"/>
</dbReference>
<dbReference type="Pfam" id="PF00169">
    <property type="entry name" value="PH"/>
    <property type="match status" value="3"/>
</dbReference>
<dbReference type="Pfam" id="PF00788">
    <property type="entry name" value="RA"/>
    <property type="match status" value="1"/>
</dbReference>
<dbReference type="Pfam" id="PF00620">
    <property type="entry name" value="RhoGAP"/>
    <property type="match status" value="1"/>
</dbReference>
<dbReference type="Pfam" id="PF00536">
    <property type="entry name" value="SAM_1"/>
    <property type="match status" value="1"/>
</dbReference>
<dbReference type="PRINTS" id="PR00405">
    <property type="entry name" value="REVINTRACTNG"/>
</dbReference>
<dbReference type="SMART" id="SM00105">
    <property type="entry name" value="ArfGap"/>
    <property type="match status" value="1"/>
</dbReference>
<dbReference type="SMART" id="SM00233">
    <property type="entry name" value="PH"/>
    <property type="match status" value="5"/>
</dbReference>
<dbReference type="SMART" id="SM00324">
    <property type="entry name" value="RhoGAP"/>
    <property type="match status" value="1"/>
</dbReference>
<dbReference type="SMART" id="SM00454">
    <property type="entry name" value="SAM"/>
    <property type="match status" value="1"/>
</dbReference>
<dbReference type="SUPFAM" id="SSF57863">
    <property type="entry name" value="ArfGap/RecO-like zinc finger"/>
    <property type="match status" value="1"/>
</dbReference>
<dbReference type="SUPFAM" id="SSF48350">
    <property type="entry name" value="GTPase activation domain, GAP"/>
    <property type="match status" value="1"/>
</dbReference>
<dbReference type="SUPFAM" id="SSF50729">
    <property type="entry name" value="PH domain-like"/>
    <property type="match status" value="5"/>
</dbReference>
<dbReference type="SUPFAM" id="SSF47769">
    <property type="entry name" value="SAM/Pointed domain"/>
    <property type="match status" value="1"/>
</dbReference>
<dbReference type="PROSITE" id="PS50115">
    <property type="entry name" value="ARFGAP"/>
    <property type="match status" value="1"/>
</dbReference>
<dbReference type="PROSITE" id="PS50003">
    <property type="entry name" value="PH_DOMAIN"/>
    <property type="match status" value="4"/>
</dbReference>
<dbReference type="PROSITE" id="PS50200">
    <property type="entry name" value="RA"/>
    <property type="match status" value="1"/>
</dbReference>
<dbReference type="PROSITE" id="PS50238">
    <property type="entry name" value="RHOGAP"/>
    <property type="match status" value="1"/>
</dbReference>
<dbReference type="PROSITE" id="PS50105">
    <property type="entry name" value="SAM_DOMAIN"/>
    <property type="match status" value="1"/>
</dbReference>
<protein>
    <recommendedName>
        <fullName>Arf-GAP with Rho-GAP domain, ANK repeat and PH domain-containing protein 1</fullName>
    </recommendedName>
    <alternativeName>
        <fullName evidence="1">Centaurin-delta-2</fullName>
        <shortName evidence="1">Cnt-d2</shortName>
    </alternativeName>
</protein>
<reference evidence="23" key="1">
    <citation type="submission" date="2004-01" db="EMBL/GenBank/DDBJ databases">
        <title>ARAP1 splice variants in man and mouse.</title>
        <authorList>
            <person name="Krugmann S."/>
            <person name="Coadwell J."/>
            <person name="Stephens L.R."/>
            <person name="Hawkins P.T."/>
        </authorList>
    </citation>
    <scope>NUCLEOTIDE SEQUENCE [MRNA] (ISOFORM 1)</scope>
    <source>
        <strain>C57BL/6J</strain>
    </source>
</reference>
<reference evidence="20" key="2">
    <citation type="journal article" date="2005" name="Science">
        <title>The transcriptional landscape of the mammalian genome.</title>
        <authorList>
            <person name="Carninci P."/>
            <person name="Kasukawa T."/>
            <person name="Katayama S."/>
            <person name="Gough J."/>
            <person name="Frith M.C."/>
            <person name="Maeda N."/>
            <person name="Oyama R."/>
            <person name="Ravasi T."/>
            <person name="Lenhard B."/>
            <person name="Wells C."/>
            <person name="Kodzius R."/>
            <person name="Shimokawa K."/>
            <person name="Bajic V.B."/>
            <person name="Brenner S.E."/>
            <person name="Batalov S."/>
            <person name="Forrest A.R."/>
            <person name="Zavolan M."/>
            <person name="Davis M.J."/>
            <person name="Wilming L.G."/>
            <person name="Aidinis V."/>
            <person name="Allen J.E."/>
            <person name="Ambesi-Impiombato A."/>
            <person name="Apweiler R."/>
            <person name="Aturaliya R.N."/>
            <person name="Bailey T.L."/>
            <person name="Bansal M."/>
            <person name="Baxter L."/>
            <person name="Beisel K.W."/>
            <person name="Bersano T."/>
            <person name="Bono H."/>
            <person name="Chalk A.M."/>
            <person name="Chiu K.P."/>
            <person name="Choudhary V."/>
            <person name="Christoffels A."/>
            <person name="Clutterbuck D.R."/>
            <person name="Crowe M.L."/>
            <person name="Dalla E."/>
            <person name="Dalrymple B.P."/>
            <person name="de Bono B."/>
            <person name="Della Gatta G."/>
            <person name="di Bernardo D."/>
            <person name="Down T."/>
            <person name="Engstrom P."/>
            <person name="Fagiolini M."/>
            <person name="Faulkner G."/>
            <person name="Fletcher C.F."/>
            <person name="Fukushima T."/>
            <person name="Furuno M."/>
            <person name="Futaki S."/>
            <person name="Gariboldi M."/>
            <person name="Georgii-Hemming P."/>
            <person name="Gingeras T.R."/>
            <person name="Gojobori T."/>
            <person name="Green R.E."/>
            <person name="Gustincich S."/>
            <person name="Harbers M."/>
            <person name="Hayashi Y."/>
            <person name="Hensch T.K."/>
            <person name="Hirokawa N."/>
            <person name="Hill D."/>
            <person name="Huminiecki L."/>
            <person name="Iacono M."/>
            <person name="Ikeo K."/>
            <person name="Iwama A."/>
            <person name="Ishikawa T."/>
            <person name="Jakt M."/>
            <person name="Kanapin A."/>
            <person name="Katoh M."/>
            <person name="Kawasawa Y."/>
            <person name="Kelso J."/>
            <person name="Kitamura H."/>
            <person name="Kitano H."/>
            <person name="Kollias G."/>
            <person name="Krishnan S.P."/>
            <person name="Kruger A."/>
            <person name="Kummerfeld S.K."/>
            <person name="Kurochkin I.V."/>
            <person name="Lareau L.F."/>
            <person name="Lazarevic D."/>
            <person name="Lipovich L."/>
            <person name="Liu J."/>
            <person name="Liuni S."/>
            <person name="McWilliam S."/>
            <person name="Madan Babu M."/>
            <person name="Madera M."/>
            <person name="Marchionni L."/>
            <person name="Matsuda H."/>
            <person name="Matsuzawa S."/>
            <person name="Miki H."/>
            <person name="Mignone F."/>
            <person name="Miyake S."/>
            <person name="Morris K."/>
            <person name="Mottagui-Tabar S."/>
            <person name="Mulder N."/>
            <person name="Nakano N."/>
            <person name="Nakauchi H."/>
            <person name="Ng P."/>
            <person name="Nilsson R."/>
            <person name="Nishiguchi S."/>
            <person name="Nishikawa S."/>
            <person name="Nori F."/>
            <person name="Ohara O."/>
            <person name="Okazaki Y."/>
            <person name="Orlando V."/>
            <person name="Pang K.C."/>
            <person name="Pavan W.J."/>
            <person name="Pavesi G."/>
            <person name="Pesole G."/>
            <person name="Petrovsky N."/>
            <person name="Piazza S."/>
            <person name="Reed J."/>
            <person name="Reid J.F."/>
            <person name="Ring B.Z."/>
            <person name="Ringwald M."/>
            <person name="Rost B."/>
            <person name="Ruan Y."/>
            <person name="Salzberg S.L."/>
            <person name="Sandelin A."/>
            <person name="Schneider C."/>
            <person name="Schoenbach C."/>
            <person name="Sekiguchi K."/>
            <person name="Semple C.A."/>
            <person name="Seno S."/>
            <person name="Sessa L."/>
            <person name="Sheng Y."/>
            <person name="Shibata Y."/>
            <person name="Shimada H."/>
            <person name="Shimada K."/>
            <person name="Silva D."/>
            <person name="Sinclair B."/>
            <person name="Sperling S."/>
            <person name="Stupka E."/>
            <person name="Sugiura K."/>
            <person name="Sultana R."/>
            <person name="Takenaka Y."/>
            <person name="Taki K."/>
            <person name="Tammoja K."/>
            <person name="Tan S.L."/>
            <person name="Tang S."/>
            <person name="Taylor M.S."/>
            <person name="Tegner J."/>
            <person name="Teichmann S.A."/>
            <person name="Ueda H.R."/>
            <person name="van Nimwegen E."/>
            <person name="Verardo R."/>
            <person name="Wei C.L."/>
            <person name="Yagi K."/>
            <person name="Yamanishi H."/>
            <person name="Zabarovsky E."/>
            <person name="Zhu S."/>
            <person name="Zimmer A."/>
            <person name="Hide W."/>
            <person name="Bult C."/>
            <person name="Grimmond S.M."/>
            <person name="Teasdale R.D."/>
            <person name="Liu E.T."/>
            <person name="Brusic V."/>
            <person name="Quackenbush J."/>
            <person name="Wahlestedt C."/>
            <person name="Mattick J.S."/>
            <person name="Hume D.A."/>
            <person name="Kai C."/>
            <person name="Sasaki D."/>
            <person name="Tomaru Y."/>
            <person name="Fukuda S."/>
            <person name="Kanamori-Katayama M."/>
            <person name="Suzuki M."/>
            <person name="Aoki J."/>
            <person name="Arakawa T."/>
            <person name="Iida J."/>
            <person name="Imamura K."/>
            <person name="Itoh M."/>
            <person name="Kato T."/>
            <person name="Kawaji H."/>
            <person name="Kawagashira N."/>
            <person name="Kawashima T."/>
            <person name="Kojima M."/>
            <person name="Kondo S."/>
            <person name="Konno H."/>
            <person name="Nakano K."/>
            <person name="Ninomiya N."/>
            <person name="Nishio T."/>
            <person name="Okada M."/>
            <person name="Plessy C."/>
            <person name="Shibata K."/>
            <person name="Shiraki T."/>
            <person name="Suzuki S."/>
            <person name="Tagami M."/>
            <person name="Waki K."/>
            <person name="Watahiki A."/>
            <person name="Okamura-Oho Y."/>
            <person name="Suzuki H."/>
            <person name="Kawai J."/>
            <person name="Hayashizaki Y."/>
        </authorList>
    </citation>
    <scope>NUCLEOTIDE SEQUENCE [LARGE SCALE MRNA] (ISOFORMS 2 AND 3)</scope>
    <source>
        <strain evidence="20">C57BL/6J</strain>
        <tissue evidence="20">Bone</tissue>
        <tissue evidence="22">Bone marrow macrophage</tissue>
        <tissue evidence="21">Cerebellum</tissue>
    </source>
</reference>
<reference evidence="18" key="3">
    <citation type="journal article" date="2004" name="Genome Res.">
        <title>The status, quality, and expansion of the NIH full-length cDNA project: the Mammalian Gene Collection (MGC).</title>
        <authorList>
            <consortium name="The MGC Project Team"/>
        </authorList>
    </citation>
    <scope>NUCLEOTIDE SEQUENCE [LARGE SCALE MRNA] (ISOFORM 2)</scope>
    <scope>NUCLEOTIDE SEQUENCE [LARGE SCALE MRNA] OF 1320-1452 (ISOFORM 2/3)</scope>
    <source>
        <strain evidence="17">FVB/N</strain>
        <tissue evidence="18">Brain</tissue>
        <tissue evidence="17">Liver</tissue>
    </source>
</reference>
<reference evidence="19" key="4">
    <citation type="journal article" date="2003" name="DNA Res.">
        <title>Prediction of the coding sequences of mouse homologues of KIAA gene: III. The complete nucleotide sequences of 500 mouse KIAA-homologous cDNAs identified by screening of terminal sequences of cDNA clones randomly sampled from size-fractionated libraries.</title>
        <authorList>
            <person name="Okazaki N."/>
            <person name="Kikuno R."/>
            <person name="Ohara R."/>
            <person name="Inamoto S."/>
            <person name="Koseki H."/>
            <person name="Hiraoka S."/>
            <person name="Saga Y."/>
            <person name="Nagase T."/>
            <person name="Ohara O."/>
            <person name="Koga H."/>
        </authorList>
    </citation>
    <scope>NUCLEOTIDE SEQUENCE [LARGE SCALE MRNA] OF 295-1452 (ISOFORM 2/3)</scope>
    <source>
        <tissue evidence="19">Brain</tissue>
    </source>
</reference>
<reference key="5">
    <citation type="journal article" date="2010" name="Cell">
        <title>A tissue-specific atlas of mouse protein phosphorylation and expression.</title>
        <authorList>
            <person name="Huttlin E.L."/>
            <person name="Jedrychowski M.P."/>
            <person name="Elias J.E."/>
            <person name="Goswami T."/>
            <person name="Rad R."/>
            <person name="Beausoleil S.A."/>
            <person name="Villen J."/>
            <person name="Haas W."/>
            <person name="Sowa M.E."/>
            <person name="Gygi S.P."/>
        </authorList>
    </citation>
    <scope>PHOSPHORYLATION [LARGE SCALE ANALYSIS] AT SER-1437</scope>
    <scope>IDENTIFICATION BY MASS SPECTROMETRY [LARGE SCALE ANALYSIS]</scope>
    <source>
        <tissue>Brain</tissue>
        <tissue>Brown adipose tissue</tissue>
        <tissue>Kidney</tissue>
        <tissue>Lung</tissue>
        <tissue>Pancreas</tissue>
        <tissue>Spleen</tissue>
        <tissue>Testis</tissue>
    </source>
</reference>
<reference key="6">
    <citation type="journal article" date="2017" name="Invest. Ophthalmol. Vis. Sci.">
        <title>Arap1 Deficiency Causes Photoreceptor Degeneration in Mice.</title>
        <authorList>
            <person name="Moshiri A."/>
            <person name="Humpal D."/>
            <person name="Leonard B.C."/>
            <person name="Imai D.M."/>
            <person name="Tham A."/>
            <person name="Bower L."/>
            <person name="Clary D."/>
            <person name="Glaser T.M."/>
            <person name="Lloyd K.C."/>
            <person name="Murphy C.J."/>
        </authorList>
    </citation>
    <scope>FUNCTION</scope>
    <scope>TISSUE SPECIFICITY</scope>
    <scope>DISRUPTION PHENOTYPE</scope>
</reference>
<reference key="7">
    <citation type="journal article" date="2018" name="IScience">
        <title>ARAP1 Bridges Actin Dynamics and AP-3-Dependent Membrane Traffic in Bone-Digesting Osteoclasts.</title>
        <authorList>
            <person name="Segeletz S."/>
            <person name="Danglot L."/>
            <person name="Galli T."/>
            <person name="Hoflack B."/>
        </authorList>
    </citation>
    <scope>FUNCTION</scope>
    <scope>SUBCELLULAR LOCATION</scope>
    <scope>TISSUE SPECIFICITY</scope>
    <scope>DEVELOPMENTAL STAGE</scope>
</reference>
<reference key="8">
    <citation type="journal article" date="2022" name="Dis. Model. Mech.">
        <title>Arap1 loss causes retinal pigment epithelium phagocytic dysfunction and subsequent photoreceptor death.</title>
        <authorList>
            <person name="Shao A."/>
            <person name="Lopez A.J."/>
            <person name="Chen J."/>
            <person name="Tham A."/>
            <person name="Javier S."/>
            <person name="Quiroz A."/>
            <person name="Frick S."/>
            <person name="Levine E.M."/>
            <person name="Lloyd K.C.K."/>
            <person name="Leonard B.C."/>
            <person name="Murphy C.J."/>
            <person name="Glaser T.M."/>
            <person name="Moshiri A."/>
        </authorList>
    </citation>
    <scope>FUNCTION</scope>
    <scope>TISSUE SPECIFICITY</scope>
    <scope>DISRUPTION PHENOTYPE</scope>
</reference>
<reference evidence="25" key="9">
    <citation type="journal article" date="2018" name="Biochemistry">
        <title>Biochemical and Structural Studies of the Interaction between ARAP1 and CIN85.</title>
        <authorList>
            <person name="Li Q."/>
            <person name="Yang W."/>
            <person name="Wang Y."/>
            <person name="Liu W."/>
        </authorList>
    </citation>
    <scope>X-RAY CRYSTALLOGRAPHY (1.32 ANGSTROMS) OF 80-90 IN COMPLEX WITH SH3KBP1</scope>
    <scope>INTERACTION WITH SH3KBP1</scope>
    <scope>MUTAGENESIS OF HIS-87 AND ARG-90</scope>
</reference>
<keyword id="KW-0002">3D-structure</keyword>
<keyword id="KW-0025">Alternative splicing</keyword>
<keyword id="KW-0965">Cell junction</keyword>
<keyword id="KW-1003">Cell membrane</keyword>
<keyword id="KW-0966">Cell projection</keyword>
<keyword id="KW-0963">Cytoplasm</keyword>
<keyword id="KW-0967">Endosome</keyword>
<keyword id="KW-0333">Golgi apparatus</keyword>
<keyword id="KW-0343">GTPase activation</keyword>
<keyword id="KW-0472">Membrane</keyword>
<keyword id="KW-0479">Metal-binding</keyword>
<keyword id="KW-0597">Phosphoprotein</keyword>
<keyword id="KW-1185">Reference proteome</keyword>
<keyword id="KW-0677">Repeat</keyword>
<keyword id="KW-0862">Zinc</keyword>
<keyword id="KW-0863">Zinc-finger</keyword>
<gene>
    <name evidence="24" type="primary">Arap1</name>
    <name evidence="18 24" type="synonym">Centd2</name>
    <name evidence="19" type="synonym">Kiaa0782</name>
</gene>
<feature type="chain" id="PRO_0000367029" description="Arf-GAP with Rho-GAP domain, ANK repeat and PH domain-containing protein 1">
    <location>
        <begin position="1"/>
        <end position="1452"/>
    </location>
</feature>
<feature type="domain" description="SAM" evidence="5">
    <location>
        <begin position="6"/>
        <end position="70"/>
    </location>
</feature>
<feature type="domain" description="PH 1" evidence="2">
    <location>
        <begin position="329"/>
        <end position="421"/>
    </location>
</feature>
<feature type="domain" description="PH 2" evidence="2">
    <location>
        <begin position="442"/>
        <end position="531"/>
    </location>
</feature>
<feature type="domain" description="Arf-GAP" evidence="6">
    <location>
        <begin position="537"/>
        <end position="662"/>
    </location>
</feature>
<feature type="domain" description="PH 3" evidence="2">
    <location>
        <begin position="745"/>
        <end position="852"/>
    </location>
</feature>
<feature type="domain" description="Rho-GAP" evidence="4">
    <location>
        <begin position="956"/>
        <end position="1141"/>
    </location>
</feature>
<feature type="domain" description="Ras-associating" evidence="3">
    <location>
        <begin position="1174"/>
        <end position="1263"/>
    </location>
</feature>
<feature type="domain" description="PH 4" evidence="2">
    <location>
        <begin position="1276"/>
        <end position="1398"/>
    </location>
</feature>
<feature type="zinc finger region" description="C4-type" evidence="6">
    <location>
        <begin position="552"/>
        <end position="575"/>
    </location>
</feature>
<feature type="region of interest" description="Required for interaction with SH3KBP1" evidence="11">
    <location>
        <begin position="81"/>
        <end position="90"/>
    </location>
</feature>
<feature type="region of interest" description="Disordered" evidence="7">
    <location>
        <begin position="87"/>
        <end position="258"/>
    </location>
</feature>
<feature type="region of interest" description="Disordered" evidence="7">
    <location>
        <begin position="271"/>
        <end position="304"/>
    </location>
</feature>
<feature type="compositionally biased region" description="Pro residues" evidence="7">
    <location>
        <begin position="92"/>
        <end position="104"/>
    </location>
</feature>
<feature type="compositionally biased region" description="Pro residues" evidence="7">
    <location>
        <begin position="154"/>
        <end position="167"/>
    </location>
</feature>
<feature type="compositionally biased region" description="Pro residues" evidence="7">
    <location>
        <begin position="205"/>
        <end position="225"/>
    </location>
</feature>
<feature type="compositionally biased region" description="Acidic residues" evidence="7">
    <location>
        <begin position="228"/>
        <end position="239"/>
    </location>
</feature>
<feature type="compositionally biased region" description="Acidic residues" evidence="7">
    <location>
        <begin position="271"/>
        <end position="286"/>
    </location>
</feature>
<feature type="site" description="Arginine finger; crucial for GTP hydrolysis by stabilizing the transition state" evidence="4">
    <location>
        <position position="995"/>
    </location>
</feature>
<feature type="modified residue" description="Phosphoserine" evidence="1">
    <location>
        <position position="232"/>
    </location>
</feature>
<feature type="modified residue" description="Phosphotyrosine; by PTK6" evidence="1">
    <location>
        <position position="234"/>
    </location>
</feature>
<feature type="modified residue" description="Phosphoserine" evidence="1">
    <location>
        <position position="430"/>
    </location>
</feature>
<feature type="modified residue" description="Phosphotyrosine" evidence="1">
    <location>
        <position position="506"/>
    </location>
</feature>
<feature type="modified residue" description="Phosphoserine" evidence="1">
    <location>
        <position position="740"/>
    </location>
</feature>
<feature type="modified residue" description="Phosphoserine" evidence="1">
    <location>
        <position position="1430"/>
    </location>
</feature>
<feature type="modified residue" description="Phosphoserine" evidence="26">
    <location>
        <position position="1437"/>
    </location>
</feature>
<feature type="splice variant" id="VSP_053047" description="In isoform 3." evidence="15">
    <location>
        <begin position="1"/>
        <end position="248"/>
    </location>
</feature>
<feature type="splice variant" id="VSP_053048" description="In isoform 2 and isoform 3." evidence="14 15">
    <location>
        <begin position="1322"/>
        <end position="1332"/>
    </location>
</feature>
<feature type="mutagenesis site" description="Does not significantly affect interaction with SH3KBP1." evidence="11">
    <original>H</original>
    <variation>A</variation>
    <location>
        <position position="87"/>
    </location>
</feature>
<feature type="mutagenesis site" description="Significantly reduces interaction with SH3KBP1." evidence="11">
    <original>H</original>
    <variation>P</variation>
    <location>
        <position position="87"/>
    </location>
</feature>
<feature type="mutagenesis site" description="Significantly reduces interaction with SH3KBP1." evidence="11">
    <original>R</original>
    <variation>E</variation>
    <location>
        <position position="90"/>
    </location>
</feature>
<feature type="mutagenesis site" description="Does not significantly affect interaction with SH3KBP1." evidence="11">
    <original>R</original>
    <variation>H</variation>
    <variation>K</variation>
    <location>
        <position position="90"/>
    </location>
</feature>
<feature type="sequence conflict" description="In Ref. 3; AAI41180." evidence="16" ref="3">
    <original>P</original>
    <variation>S</variation>
    <location>
        <position position="153"/>
    </location>
</feature>
<feature type="sequence conflict" description="In Ref. 3; AAI41180." evidence="16" ref="3">
    <original>S</original>
    <variation>A</variation>
    <location>
        <position position="280"/>
    </location>
</feature>
<feature type="sequence conflict" description="In Ref. 1; CAF21318." evidence="16" ref="1">
    <original>V</original>
    <variation>G</variation>
    <location>
        <position position="924"/>
    </location>
</feature>
<feature type="sequence conflict" description="In Ref. 3; AAH57922." evidence="16" ref="3">
    <original>T</original>
    <variation>R</variation>
    <location>
        <position position="1331"/>
    </location>
</feature>
<proteinExistence type="evidence at protein level"/>